<dbReference type="EC" id="2.5.1.-" evidence="1"/>
<dbReference type="EMBL" id="FM954972">
    <property type="protein sequence ID" value="CAV18227.1"/>
    <property type="molecule type" value="Genomic_DNA"/>
</dbReference>
<dbReference type="SMR" id="B7VMH7"/>
<dbReference type="STRING" id="575788.VS_1101"/>
<dbReference type="KEGG" id="vsp:VS_1101"/>
<dbReference type="PATRIC" id="fig|575788.5.peg.2424"/>
<dbReference type="eggNOG" id="COG0500">
    <property type="taxonomic scope" value="Bacteria"/>
</dbReference>
<dbReference type="HOGENOM" id="CLU_052665_0_0_6"/>
<dbReference type="Proteomes" id="UP000009100">
    <property type="component" value="Chromosome 1"/>
</dbReference>
<dbReference type="GO" id="GO:0016765">
    <property type="term" value="F:transferase activity, transferring alkyl or aryl (other than methyl) groups"/>
    <property type="evidence" value="ECO:0007669"/>
    <property type="project" value="UniProtKB-UniRule"/>
</dbReference>
<dbReference type="GO" id="GO:0002098">
    <property type="term" value="P:tRNA wobble uridine modification"/>
    <property type="evidence" value="ECO:0007669"/>
    <property type="project" value="InterPro"/>
</dbReference>
<dbReference type="CDD" id="cd02440">
    <property type="entry name" value="AdoMet_MTases"/>
    <property type="match status" value="1"/>
</dbReference>
<dbReference type="Gene3D" id="3.40.50.150">
    <property type="entry name" value="Vaccinia Virus protein VP39"/>
    <property type="match status" value="1"/>
</dbReference>
<dbReference type="HAMAP" id="MF_01590">
    <property type="entry name" value="tRNA_carboxymethyltr_CmoB"/>
    <property type="match status" value="1"/>
</dbReference>
<dbReference type="InterPro" id="IPR010017">
    <property type="entry name" value="CmoB"/>
</dbReference>
<dbReference type="InterPro" id="IPR027555">
    <property type="entry name" value="Mo5U34_MeTrfas-like"/>
</dbReference>
<dbReference type="InterPro" id="IPR029063">
    <property type="entry name" value="SAM-dependent_MTases_sf"/>
</dbReference>
<dbReference type="NCBIfam" id="NF011650">
    <property type="entry name" value="PRK15068.1"/>
    <property type="match status" value="1"/>
</dbReference>
<dbReference type="NCBIfam" id="TIGR00452">
    <property type="entry name" value="tRNA 5-methoxyuridine(34)/uridine 5-oxyacetic acid(34) synthase CmoB"/>
    <property type="match status" value="1"/>
</dbReference>
<dbReference type="PANTHER" id="PTHR43861">
    <property type="entry name" value="TRANS-ACONITATE 2-METHYLTRANSFERASE-RELATED"/>
    <property type="match status" value="1"/>
</dbReference>
<dbReference type="Pfam" id="PF08003">
    <property type="entry name" value="Methyltransf_9"/>
    <property type="match status" value="1"/>
</dbReference>
<dbReference type="SUPFAM" id="SSF53335">
    <property type="entry name" value="S-adenosyl-L-methionine-dependent methyltransferases"/>
    <property type="match status" value="1"/>
</dbReference>
<protein>
    <recommendedName>
        <fullName evidence="1">tRNA U34 carboxymethyltransferase</fullName>
        <ecNumber evidence="1">2.5.1.-</ecNumber>
    </recommendedName>
</protein>
<feature type="chain" id="PRO_1000185698" description="tRNA U34 carboxymethyltransferase">
    <location>
        <begin position="1"/>
        <end position="323"/>
    </location>
</feature>
<feature type="binding site" evidence="1">
    <location>
        <position position="91"/>
    </location>
    <ligand>
        <name>carboxy-S-adenosyl-L-methionine</name>
        <dbReference type="ChEBI" id="CHEBI:134278"/>
    </ligand>
</feature>
<feature type="binding site" evidence="1">
    <location>
        <position position="105"/>
    </location>
    <ligand>
        <name>carboxy-S-adenosyl-L-methionine</name>
        <dbReference type="ChEBI" id="CHEBI:134278"/>
    </ligand>
</feature>
<feature type="binding site" evidence="1">
    <location>
        <position position="110"/>
    </location>
    <ligand>
        <name>carboxy-S-adenosyl-L-methionine</name>
        <dbReference type="ChEBI" id="CHEBI:134278"/>
    </ligand>
</feature>
<feature type="binding site" evidence="1">
    <location>
        <position position="130"/>
    </location>
    <ligand>
        <name>carboxy-S-adenosyl-L-methionine</name>
        <dbReference type="ChEBI" id="CHEBI:134278"/>
    </ligand>
</feature>
<feature type="binding site" evidence="1">
    <location>
        <begin position="152"/>
        <end position="154"/>
    </location>
    <ligand>
        <name>carboxy-S-adenosyl-L-methionine</name>
        <dbReference type="ChEBI" id="CHEBI:134278"/>
    </ligand>
</feature>
<feature type="binding site" evidence="1">
    <location>
        <begin position="181"/>
        <end position="182"/>
    </location>
    <ligand>
        <name>carboxy-S-adenosyl-L-methionine</name>
        <dbReference type="ChEBI" id="CHEBI:134278"/>
    </ligand>
</feature>
<feature type="binding site" evidence="1">
    <location>
        <position position="196"/>
    </location>
    <ligand>
        <name>carboxy-S-adenosyl-L-methionine</name>
        <dbReference type="ChEBI" id="CHEBI:134278"/>
    </ligand>
</feature>
<feature type="binding site" evidence="1">
    <location>
        <position position="200"/>
    </location>
    <ligand>
        <name>carboxy-S-adenosyl-L-methionine</name>
        <dbReference type="ChEBI" id="CHEBI:134278"/>
    </ligand>
</feature>
<feature type="binding site" evidence="1">
    <location>
        <position position="315"/>
    </location>
    <ligand>
        <name>carboxy-S-adenosyl-L-methionine</name>
        <dbReference type="ChEBI" id="CHEBI:134278"/>
    </ligand>
</feature>
<reference key="1">
    <citation type="submission" date="2009-02" db="EMBL/GenBank/DDBJ databases">
        <title>Vibrio splendidus str. LGP32 complete genome.</title>
        <authorList>
            <person name="Mazel D."/>
            <person name="Le Roux F."/>
        </authorList>
    </citation>
    <scope>NUCLEOTIDE SEQUENCE [LARGE SCALE GENOMIC DNA]</scope>
    <source>
        <strain>LGP32</strain>
    </source>
</reference>
<comment type="function">
    <text evidence="1">Catalyzes carboxymethyl transfer from carboxy-S-adenosyl-L-methionine (Cx-SAM) to 5-hydroxyuridine (ho5U) to form 5-carboxymethoxyuridine (cmo5U) at position 34 in tRNAs.</text>
</comment>
<comment type="catalytic activity">
    <reaction evidence="1">
        <text>carboxy-S-adenosyl-L-methionine + 5-hydroxyuridine(34) in tRNA = 5-carboxymethoxyuridine(34) in tRNA + S-adenosyl-L-homocysteine + H(+)</text>
        <dbReference type="Rhea" id="RHEA:52848"/>
        <dbReference type="Rhea" id="RHEA-COMP:13381"/>
        <dbReference type="Rhea" id="RHEA-COMP:13383"/>
        <dbReference type="ChEBI" id="CHEBI:15378"/>
        <dbReference type="ChEBI" id="CHEBI:57856"/>
        <dbReference type="ChEBI" id="CHEBI:134278"/>
        <dbReference type="ChEBI" id="CHEBI:136877"/>
        <dbReference type="ChEBI" id="CHEBI:136879"/>
    </reaction>
</comment>
<comment type="subunit">
    <text evidence="1">Homotetramer.</text>
</comment>
<comment type="similarity">
    <text evidence="1">Belongs to the class I-like SAM-binding methyltransferase superfamily. CmoB family.</text>
</comment>
<organism>
    <name type="scientific">Vibrio atlanticus (strain LGP32)</name>
    <name type="common">Vibrio splendidus (strain Mel32)</name>
    <dbReference type="NCBI Taxonomy" id="575788"/>
    <lineage>
        <taxon>Bacteria</taxon>
        <taxon>Pseudomonadati</taxon>
        <taxon>Pseudomonadota</taxon>
        <taxon>Gammaproteobacteria</taxon>
        <taxon>Vibrionales</taxon>
        <taxon>Vibrionaceae</taxon>
        <taxon>Vibrio</taxon>
    </lineage>
</organism>
<name>CMOB_VIBA3</name>
<proteinExistence type="inferred from homology"/>
<evidence type="ECO:0000255" key="1">
    <source>
        <dbReference type="HAMAP-Rule" id="MF_01590"/>
    </source>
</evidence>
<gene>
    <name evidence="1" type="primary">cmoB</name>
    <name type="ordered locus">VS_1101</name>
</gene>
<accession>B7VMH7</accession>
<keyword id="KW-0808">Transferase</keyword>
<keyword id="KW-0819">tRNA processing</keyword>
<sequence length="323" mass="37197">MFNFANFYQLIAQDTRLQPWLNVLPQQLTDWQNAEHGDFDRWLRALNKIPQGVPDQVDLKNSVTIGSSTPFHTGELKKLESLLKTFHPWRKGPYTVHDIHIDTEWRSDWKWDRVLPHISPLKNRSVLDVGCGNGYHMWRMLGEGARLTVGIDPSHLFLVQFEAIRKLMGDDQRAHLLPLGIEQLPKLEAYDTVFSMGVLYHRRSPLDHLIQLKDQLVSGGELVLETLVIEGDENAVLVPVDRYAQMRNVYFFPSARALKRWLEQVGFEDVRIVDENVTTIGEQRTTDWMTHNSLPDYLDPNDPSKTVEGHPAPRRAILVATKP</sequence>